<name>HRPB_RALN1</name>
<keyword id="KW-0010">Activator</keyword>
<keyword id="KW-0238">DNA-binding</keyword>
<keyword id="KW-0928">Hypersensitive response elicitation</keyword>
<keyword id="KW-0614">Plasmid</keyword>
<keyword id="KW-1185">Reference proteome</keyword>
<keyword id="KW-0804">Transcription</keyword>
<keyword id="KW-0805">Transcription regulation</keyword>
<sequence>MLGNIYFALASGLAARERLPEYANAVFAADFDRAYQLVDHHSSQRGKSDDYAGVLAMADASLLLECDEEAEEGFRLAQRLIRHSDDQLRVVSCRNTGWQALLRDRYAAAASCFSRMAEDDGATWTQQVEGLIGLALVHHQLGQQDASDDALRAAREAADGRSDRGWLATIDLIIYEFAVQAGIRCSNRLLEHAFWQSAEMGATLLANHGGRNGWTPTVSQGVPMPALIQRRAEYLSLLRRMADGDRAAIDPLMATLNHSRKLGSRLLMQTKVEVVLAALSGEQYDVAGRVFDQICNRETTYGARRWNFDFLYCRAKMAAQRGDAAGALKFYTTYMQDALRCLRTETVNVRRASAAVPVASRASDDVSARLSAKYRRAYRYIIENIERSDLTTREVAAHINVTERALQLAFKSAVGMSPSSVIRRMRLEGIRSDLLDSERNPSNIIDTASRWGIRSRSALVKGYRKQFNEAPSETIWR</sequence>
<protein>
    <recommendedName>
        <fullName>Regulatory protein HrpB</fullName>
    </recommendedName>
</protein>
<accession>P31778</accession>
<reference key="1">
    <citation type="journal article" date="1992" name="Mol. Microbiol.">
        <title>Evidence that the hrpB gene encodes a positive regulator of pathogenicity genes from Pseudomonas solanacearum.</title>
        <authorList>
            <person name="Genin S."/>
            <person name="Gough C.L."/>
            <person name="Zischek C."/>
            <person name="Boucher C.A."/>
        </authorList>
    </citation>
    <scope>NUCLEOTIDE SEQUENCE [GENOMIC DNA]</scope>
    <source>
        <strain>ATCC BAA-1114 / GMI1000</strain>
    </source>
</reference>
<reference key="2">
    <citation type="journal article" date="2002" name="Nature">
        <title>Genome sequence of the plant pathogen Ralstonia solanacearum.</title>
        <authorList>
            <person name="Salanoubat M."/>
            <person name="Genin S."/>
            <person name="Artiguenave F."/>
            <person name="Gouzy J."/>
            <person name="Mangenot S."/>
            <person name="Arlat M."/>
            <person name="Billault A."/>
            <person name="Brottier P."/>
            <person name="Camus J.-C."/>
            <person name="Cattolico L."/>
            <person name="Chandler M."/>
            <person name="Choisne N."/>
            <person name="Claudel-Renard C."/>
            <person name="Cunnac S."/>
            <person name="Demange N."/>
            <person name="Gaspin C."/>
            <person name="Lavie M."/>
            <person name="Moisan A."/>
            <person name="Robert C."/>
            <person name="Saurin W."/>
            <person name="Schiex T."/>
            <person name="Siguier P."/>
            <person name="Thebault P."/>
            <person name="Whalen M."/>
            <person name="Wincker P."/>
            <person name="Levy M."/>
            <person name="Weissenbach J."/>
            <person name="Boucher C.A."/>
        </authorList>
    </citation>
    <scope>NUCLEOTIDE SEQUENCE [LARGE SCALE GENOMIC DNA]</scope>
    <source>
        <strain>ATCC BAA-1114 / GMI1000</strain>
    </source>
</reference>
<organism>
    <name type="scientific">Ralstonia nicotianae (strain ATCC BAA-1114 / GMI1000)</name>
    <name type="common">Ralstonia solanacearum</name>
    <dbReference type="NCBI Taxonomy" id="267608"/>
    <lineage>
        <taxon>Bacteria</taxon>
        <taxon>Pseudomonadati</taxon>
        <taxon>Pseudomonadota</taxon>
        <taxon>Betaproteobacteria</taxon>
        <taxon>Burkholderiales</taxon>
        <taxon>Burkholderiaceae</taxon>
        <taxon>Ralstonia</taxon>
        <taxon>Ralstonia solanacearum species complex</taxon>
    </lineage>
</organism>
<evidence type="ECO:0000255" key="1">
    <source>
        <dbReference type="PROSITE-ProRule" id="PRU00593"/>
    </source>
</evidence>
<gene>
    <name type="primary">hrpB</name>
    <name type="ordered locus">RSp0873</name>
    <name type="ORF">RS01644</name>
</gene>
<feature type="chain" id="PRO_0000194525" description="Regulatory protein HrpB">
    <location>
        <begin position="1"/>
        <end position="477"/>
    </location>
</feature>
<feature type="domain" description="HTH araC/xylS-type" evidence="1">
    <location>
        <begin position="375"/>
        <end position="477"/>
    </location>
</feature>
<feature type="DNA-binding region" description="H-T-H motif" evidence="1">
    <location>
        <begin position="393"/>
        <end position="414"/>
    </location>
</feature>
<feature type="DNA-binding region" description="H-T-H motif" evidence="1">
    <location>
        <begin position="444"/>
        <end position="467"/>
    </location>
</feature>
<dbReference type="EMBL" id="AJ245811">
    <property type="protein sequence ID" value="CAB58260.1"/>
    <property type="molecule type" value="Genomic_DNA"/>
</dbReference>
<dbReference type="EMBL" id="AL646053">
    <property type="protein sequence ID" value="CAD18024.1"/>
    <property type="molecule type" value="Genomic_DNA"/>
</dbReference>
<dbReference type="PIR" id="S28010">
    <property type="entry name" value="S28010"/>
</dbReference>
<dbReference type="RefSeq" id="WP_011004170.1">
    <property type="nucleotide sequence ID" value="NC_003296.1"/>
</dbReference>
<dbReference type="SMR" id="P31778"/>
<dbReference type="STRING" id="267608.RSp0873"/>
<dbReference type="EnsemblBacteria" id="CAD18024">
    <property type="protein sequence ID" value="CAD18024"/>
    <property type="gene ID" value="RSp0873"/>
</dbReference>
<dbReference type="KEGG" id="rso:RSp0873"/>
<dbReference type="eggNOG" id="COG2207">
    <property type="taxonomic scope" value="Bacteria"/>
</dbReference>
<dbReference type="HOGENOM" id="CLU_573568_0_0_4"/>
<dbReference type="PHI-base" id="PHI:10247"/>
<dbReference type="PHI-base" id="PHI:7462"/>
<dbReference type="Proteomes" id="UP000001436">
    <property type="component" value="Plasmid megaplasmid Rsp"/>
</dbReference>
<dbReference type="GO" id="GO:0003700">
    <property type="term" value="F:DNA-binding transcription factor activity"/>
    <property type="evidence" value="ECO:0007669"/>
    <property type="project" value="InterPro"/>
</dbReference>
<dbReference type="GO" id="GO:0043565">
    <property type="term" value="F:sequence-specific DNA binding"/>
    <property type="evidence" value="ECO:0007669"/>
    <property type="project" value="InterPro"/>
</dbReference>
<dbReference type="GO" id="GO:0045893">
    <property type="term" value="P:positive regulation of DNA-templated transcription"/>
    <property type="evidence" value="ECO:0000270"/>
    <property type="project" value="CollecTF"/>
</dbReference>
<dbReference type="GO" id="GO:0052040">
    <property type="term" value="P:symbiont-mediated perturbation of host programmed cell death"/>
    <property type="evidence" value="ECO:0007669"/>
    <property type="project" value="UniProtKB-KW"/>
</dbReference>
<dbReference type="FunFam" id="1.10.10.60:FF:000153">
    <property type="entry name" value="HTH-type transcriptional regulator EutR"/>
    <property type="match status" value="1"/>
</dbReference>
<dbReference type="Gene3D" id="1.10.10.60">
    <property type="entry name" value="Homeodomain-like"/>
    <property type="match status" value="1"/>
</dbReference>
<dbReference type="InterPro" id="IPR050204">
    <property type="entry name" value="AraC_XylS_family_regulators"/>
</dbReference>
<dbReference type="InterPro" id="IPR018060">
    <property type="entry name" value="HTH_AraC"/>
</dbReference>
<dbReference type="InterPro" id="IPR018062">
    <property type="entry name" value="HTH_AraC-typ_CS"/>
</dbReference>
<dbReference type="PANTHER" id="PTHR46796:SF12">
    <property type="entry name" value="HTH-TYPE DNA-BINDING TRANSCRIPTIONAL ACTIVATOR EUTR"/>
    <property type="match status" value="1"/>
</dbReference>
<dbReference type="PANTHER" id="PTHR46796">
    <property type="entry name" value="HTH-TYPE TRANSCRIPTIONAL ACTIVATOR RHAS-RELATED"/>
    <property type="match status" value="1"/>
</dbReference>
<dbReference type="Pfam" id="PF12833">
    <property type="entry name" value="HTH_18"/>
    <property type="match status" value="1"/>
</dbReference>
<dbReference type="SMART" id="SM00342">
    <property type="entry name" value="HTH_ARAC"/>
    <property type="match status" value="1"/>
</dbReference>
<dbReference type="PROSITE" id="PS00041">
    <property type="entry name" value="HTH_ARAC_FAMILY_1"/>
    <property type="match status" value="1"/>
</dbReference>
<dbReference type="PROSITE" id="PS01124">
    <property type="entry name" value="HTH_ARAC_FAMILY_2"/>
    <property type="match status" value="1"/>
</dbReference>
<geneLocation type="plasmid">
    <name>megaplasmid Rsp</name>
</geneLocation>
<comment type="function">
    <text>Positive regulation of hypersensitive response genes involved in plant pathogenicity and partly of its own synthesis in minimal medium.</text>
</comment>
<proteinExistence type="predicted"/>